<comment type="catalytic activity">
    <reaction>
        <text>N-(5-phospho-beta-D-ribosyl)anthranilate = 1-(2-carboxyphenylamino)-1-deoxy-D-ribulose 5-phosphate</text>
        <dbReference type="Rhea" id="RHEA:21540"/>
        <dbReference type="ChEBI" id="CHEBI:18277"/>
        <dbReference type="ChEBI" id="CHEBI:58613"/>
        <dbReference type="EC" id="5.3.1.24"/>
    </reaction>
</comment>
<comment type="pathway">
    <text>Amino-acid biosynthesis; L-tryptophan biosynthesis; L-tryptophan from chorismate: step 3/5.</text>
</comment>
<comment type="similarity">
    <text evidence="1">Belongs to the TrpF family.</text>
</comment>
<evidence type="ECO:0000305" key="1"/>
<dbReference type="EC" id="5.3.1.24"/>
<dbReference type="EMBL" id="AE000657">
    <property type="protein sequence ID" value="AAC07811.1"/>
    <property type="molecule type" value="Genomic_DNA"/>
</dbReference>
<dbReference type="PIR" id="A70478">
    <property type="entry name" value="A70478"/>
</dbReference>
<dbReference type="RefSeq" id="NP_214422.1">
    <property type="nucleotide sequence ID" value="NC_000918.1"/>
</dbReference>
<dbReference type="RefSeq" id="WP_010881358.1">
    <property type="nucleotide sequence ID" value="NC_000918.1"/>
</dbReference>
<dbReference type="SMR" id="O67853"/>
<dbReference type="STRING" id="224324.aq_2076"/>
<dbReference type="EnsemblBacteria" id="AAC07811">
    <property type="protein sequence ID" value="AAC07811"/>
    <property type="gene ID" value="aq_2076"/>
</dbReference>
<dbReference type="KEGG" id="aae:aq_2076"/>
<dbReference type="PATRIC" id="fig|224324.8.peg.1599"/>
<dbReference type="eggNOG" id="COG0135">
    <property type="taxonomic scope" value="Bacteria"/>
</dbReference>
<dbReference type="HOGENOM" id="CLU_076364_2_0_0"/>
<dbReference type="InParanoid" id="O67853"/>
<dbReference type="OrthoDB" id="9786954at2"/>
<dbReference type="UniPathway" id="UPA00035">
    <property type="reaction ID" value="UER00042"/>
</dbReference>
<dbReference type="Proteomes" id="UP000000798">
    <property type="component" value="Chromosome"/>
</dbReference>
<dbReference type="GO" id="GO:0004640">
    <property type="term" value="F:phosphoribosylanthranilate isomerase activity"/>
    <property type="evidence" value="ECO:0000318"/>
    <property type="project" value="GO_Central"/>
</dbReference>
<dbReference type="GO" id="GO:0000162">
    <property type="term" value="P:L-tryptophan biosynthetic process"/>
    <property type="evidence" value="ECO:0000318"/>
    <property type="project" value="GO_Central"/>
</dbReference>
<dbReference type="CDD" id="cd00405">
    <property type="entry name" value="PRAI"/>
    <property type="match status" value="1"/>
</dbReference>
<dbReference type="FunFam" id="3.20.20.70:FF:000075">
    <property type="entry name" value="Tryptophan biosynthesis protein TRP1"/>
    <property type="match status" value="1"/>
</dbReference>
<dbReference type="Gene3D" id="3.20.20.70">
    <property type="entry name" value="Aldolase class I"/>
    <property type="match status" value="1"/>
</dbReference>
<dbReference type="HAMAP" id="MF_00135">
    <property type="entry name" value="PRAI"/>
    <property type="match status" value="1"/>
</dbReference>
<dbReference type="InterPro" id="IPR013785">
    <property type="entry name" value="Aldolase_TIM"/>
</dbReference>
<dbReference type="InterPro" id="IPR001240">
    <property type="entry name" value="PRAI_dom"/>
</dbReference>
<dbReference type="InterPro" id="IPR011060">
    <property type="entry name" value="RibuloseP-bd_barrel"/>
</dbReference>
<dbReference type="InterPro" id="IPR044643">
    <property type="entry name" value="TrpF_fam"/>
</dbReference>
<dbReference type="PANTHER" id="PTHR42894">
    <property type="entry name" value="N-(5'-PHOSPHORIBOSYL)ANTHRANILATE ISOMERASE"/>
    <property type="match status" value="1"/>
</dbReference>
<dbReference type="PANTHER" id="PTHR42894:SF1">
    <property type="entry name" value="N-(5'-PHOSPHORIBOSYL)ANTHRANILATE ISOMERASE"/>
    <property type="match status" value="1"/>
</dbReference>
<dbReference type="Pfam" id="PF00697">
    <property type="entry name" value="PRAI"/>
    <property type="match status" value="1"/>
</dbReference>
<dbReference type="SUPFAM" id="SSF51366">
    <property type="entry name" value="Ribulose-phoshate binding barrel"/>
    <property type="match status" value="1"/>
</dbReference>
<organism>
    <name type="scientific">Aquifex aeolicus (strain VF5)</name>
    <dbReference type="NCBI Taxonomy" id="224324"/>
    <lineage>
        <taxon>Bacteria</taxon>
        <taxon>Pseudomonadati</taxon>
        <taxon>Aquificota</taxon>
        <taxon>Aquificia</taxon>
        <taxon>Aquificales</taxon>
        <taxon>Aquificaceae</taxon>
        <taxon>Aquifex</taxon>
    </lineage>
</organism>
<reference key="1">
    <citation type="journal article" date="1998" name="Nature">
        <title>The complete genome of the hyperthermophilic bacterium Aquifex aeolicus.</title>
        <authorList>
            <person name="Deckert G."/>
            <person name="Warren P.V."/>
            <person name="Gaasterland T."/>
            <person name="Young W.G."/>
            <person name="Lenox A.L."/>
            <person name="Graham D.E."/>
            <person name="Overbeek R."/>
            <person name="Snead M.A."/>
            <person name="Keller M."/>
            <person name="Aujay M."/>
            <person name="Huber R."/>
            <person name="Feldman R.A."/>
            <person name="Short J.M."/>
            <person name="Olsen G.J."/>
            <person name="Swanson R.V."/>
        </authorList>
    </citation>
    <scope>NUCLEOTIDE SEQUENCE [LARGE SCALE GENOMIC DNA]</scope>
    <source>
        <strain>VF5</strain>
    </source>
</reference>
<proteinExistence type="inferred from homology"/>
<accession>O67853</accession>
<protein>
    <recommendedName>
        <fullName>N-(5'-phosphoribosyl)anthranilate isomerase</fullName>
        <shortName>PRAI</shortName>
        <ecNumber>5.3.1.24</ecNumber>
    </recommendedName>
</protein>
<sequence>MVKVKICGITNLEDALFCAKEGADYIGVITYPKSPRYTSKEKRLEIIKALEGLNVKKVAVVVNEPYEFIKELLDEGFDLIQLHGDEDIELGKRVGLDKVIKVFRVKEEIPKVGEWEKAYAILLDTFSKEAYGGTGKTFNWEIAKKLVEEGHKVFLSGGLNPENVKEGIEFVKPYGVDVSSGVEKEKGKKDFKKVREFIKRTKSE</sequence>
<feature type="chain" id="PRO_0000154342" description="N-(5'-phosphoribosyl)anthranilate isomerase">
    <location>
        <begin position="1"/>
        <end position="204"/>
    </location>
</feature>
<keyword id="KW-0028">Amino-acid biosynthesis</keyword>
<keyword id="KW-0057">Aromatic amino acid biosynthesis</keyword>
<keyword id="KW-0413">Isomerase</keyword>
<keyword id="KW-1185">Reference proteome</keyword>
<keyword id="KW-0822">Tryptophan biosynthesis</keyword>
<name>TRPF_AQUAE</name>
<gene>
    <name type="primary">trpF</name>
    <name type="ordered locus">aq_2076</name>
</gene>